<protein>
    <recommendedName>
        <fullName>Sterol regulatory element-binding protein 1</fullName>
    </recommendedName>
    <component>
        <recommendedName>
            <fullName>Processed sterol regulatory element-binding protein 1</fullName>
        </recommendedName>
    </component>
</protein>
<organism>
    <name type="scientific">Schizosaccharomyces pombe (strain 972 / ATCC 24843)</name>
    <name type="common">Fission yeast</name>
    <dbReference type="NCBI Taxonomy" id="284812"/>
    <lineage>
        <taxon>Eukaryota</taxon>
        <taxon>Fungi</taxon>
        <taxon>Dikarya</taxon>
        <taxon>Ascomycota</taxon>
        <taxon>Taphrinomycotina</taxon>
        <taxon>Schizosaccharomycetes</taxon>
        <taxon>Schizosaccharomycetales</taxon>
        <taxon>Schizosaccharomycetaceae</taxon>
        <taxon>Schizosaccharomyces</taxon>
    </lineage>
</organism>
<evidence type="ECO:0000250" key="1">
    <source>
        <dbReference type="UniProtKB" id="P36956"/>
    </source>
</evidence>
<evidence type="ECO:0000255" key="2"/>
<evidence type="ECO:0000255" key="3">
    <source>
        <dbReference type="PROSITE-ProRule" id="PRU00981"/>
    </source>
</evidence>
<evidence type="ECO:0000256" key="4">
    <source>
        <dbReference type="SAM" id="MobiDB-lite"/>
    </source>
</evidence>
<evidence type="ECO:0000269" key="5">
    <source>
    </source>
</evidence>
<evidence type="ECO:0000269" key="6">
    <source>
    </source>
</evidence>
<evidence type="ECO:0000269" key="7">
    <source>
    </source>
</evidence>
<evidence type="ECO:0000269" key="8">
    <source>
    </source>
</evidence>
<evidence type="ECO:0000269" key="9">
    <source>
    </source>
</evidence>
<evidence type="ECO:0000269" key="10">
    <source>
    </source>
</evidence>
<evidence type="ECO:0000269" key="11">
    <source>
    </source>
</evidence>
<evidence type="ECO:0000269" key="12">
    <source>
    </source>
</evidence>
<evidence type="ECO:0000269" key="13">
    <source>
    </source>
</evidence>
<evidence type="ECO:0000305" key="14"/>
<evidence type="ECO:0000312" key="15">
    <source>
        <dbReference type="EMBL" id="CAB52036.1"/>
    </source>
</evidence>
<evidence type="ECO:0007744" key="16">
    <source>
        <dbReference type="PDB" id="5GPD"/>
    </source>
</evidence>
<evidence type="ECO:0007744" key="17">
    <source>
        <dbReference type="PDB" id="5GRS"/>
    </source>
</evidence>
<keyword id="KW-0002">3D-structure</keyword>
<keyword id="KW-0010">Activator</keyword>
<keyword id="KW-0238">DNA-binding</keyword>
<keyword id="KW-0256">Endoplasmic reticulum</keyword>
<keyword id="KW-0443">Lipid metabolism</keyword>
<keyword id="KW-0472">Membrane</keyword>
<keyword id="KW-0539">Nucleus</keyword>
<keyword id="KW-0597">Phosphoprotein</keyword>
<keyword id="KW-1185">Reference proteome</keyword>
<keyword id="KW-0753">Steroid metabolism</keyword>
<keyword id="KW-0804">Transcription</keyword>
<keyword id="KW-0805">Transcription regulation</keyword>
<keyword id="KW-0812">Transmembrane</keyword>
<keyword id="KW-1133">Transmembrane helix</keyword>
<name>SREBP_SCHPO</name>
<dbReference type="EMBL" id="CU329671">
    <property type="protein sequence ID" value="CAB52036.1"/>
    <property type="molecule type" value="Genomic_DNA"/>
</dbReference>
<dbReference type="PIR" id="T39800">
    <property type="entry name" value="T39800"/>
</dbReference>
<dbReference type="RefSeq" id="NP_595694.1">
    <property type="nucleotide sequence ID" value="NM_001021591.2"/>
</dbReference>
<dbReference type="PDB" id="5GPD">
    <property type="method" value="X-ray"/>
    <property type="resolution" value="3.50 A"/>
    <property type="chains" value="A/B=628-876"/>
</dbReference>
<dbReference type="PDB" id="5GRS">
    <property type="method" value="EM"/>
    <property type="resolution" value="5.40 A"/>
    <property type="chains" value="E/F/G/H=628-896"/>
</dbReference>
<dbReference type="PDBsum" id="5GPD"/>
<dbReference type="PDBsum" id="5GRS"/>
<dbReference type="EMDB" id="EMD-9537"/>
<dbReference type="SMR" id="Q9UUD1"/>
<dbReference type="BioGRID" id="277253">
    <property type="interactions" value="47"/>
</dbReference>
<dbReference type="ComplexPortal" id="CPX-25718">
    <property type="entry name" value="SREBP-SCAP transcription regulator complex"/>
</dbReference>
<dbReference type="STRING" id="284812.Q9UUD1"/>
<dbReference type="iPTMnet" id="Q9UUD1"/>
<dbReference type="PaxDb" id="4896-SPBC19C2.09.1"/>
<dbReference type="EnsemblFungi" id="SPBC19C2.09.1">
    <property type="protein sequence ID" value="SPBC19C2.09.1:pep"/>
    <property type="gene ID" value="SPBC19C2.09"/>
</dbReference>
<dbReference type="GeneID" id="2540730"/>
<dbReference type="KEGG" id="spo:2540730"/>
<dbReference type="PomBase" id="SPBC19C2.09">
    <property type="gene designation" value="sre1"/>
</dbReference>
<dbReference type="VEuPathDB" id="FungiDB:SPBC19C2.09"/>
<dbReference type="eggNOG" id="KOG2588">
    <property type="taxonomic scope" value="Eukaryota"/>
</dbReference>
<dbReference type="HOGENOM" id="CLU_303504_0_0_1"/>
<dbReference type="InParanoid" id="Q9UUD1"/>
<dbReference type="OMA" id="WVYSEQQ"/>
<dbReference type="PhylomeDB" id="Q9UUD1"/>
<dbReference type="PRO" id="PR:Q9UUD1"/>
<dbReference type="Proteomes" id="UP000002485">
    <property type="component" value="Chromosome II"/>
</dbReference>
<dbReference type="GO" id="GO:0000785">
    <property type="term" value="C:chromatin"/>
    <property type="evidence" value="ECO:0000314"/>
    <property type="project" value="PomBase"/>
</dbReference>
<dbReference type="GO" id="GO:0098554">
    <property type="term" value="C:cytoplasmic side of endoplasmic reticulum membrane"/>
    <property type="evidence" value="ECO:0000304"/>
    <property type="project" value="PomBase"/>
</dbReference>
<dbReference type="GO" id="GO:0005634">
    <property type="term" value="C:nucleus"/>
    <property type="evidence" value="ECO:0000318"/>
    <property type="project" value="GO_Central"/>
</dbReference>
<dbReference type="GO" id="GO:0032936">
    <property type="term" value="C:SREBP-SCAP complex"/>
    <property type="evidence" value="ECO:0000353"/>
    <property type="project" value="PomBase"/>
</dbReference>
<dbReference type="GO" id="GO:0001216">
    <property type="term" value="F:DNA-binding transcription activator activity"/>
    <property type="evidence" value="ECO:0000318"/>
    <property type="project" value="GO_Central"/>
</dbReference>
<dbReference type="GO" id="GO:0001228">
    <property type="term" value="F:DNA-binding transcription activator activity, RNA polymerase II-specific"/>
    <property type="evidence" value="ECO:0000314"/>
    <property type="project" value="PomBase"/>
</dbReference>
<dbReference type="GO" id="GO:0046983">
    <property type="term" value="F:protein dimerization activity"/>
    <property type="evidence" value="ECO:0007669"/>
    <property type="project" value="InterPro"/>
</dbReference>
<dbReference type="GO" id="GO:0000978">
    <property type="term" value="F:RNA polymerase II cis-regulatory region sequence-specific DNA binding"/>
    <property type="evidence" value="ECO:0000314"/>
    <property type="project" value="PomBase"/>
</dbReference>
<dbReference type="GO" id="GO:0045944">
    <property type="term" value="P:positive regulation of transcription by RNA polymerase II"/>
    <property type="evidence" value="ECO:0000315"/>
    <property type="project" value="PomBase"/>
</dbReference>
<dbReference type="GO" id="GO:0032443">
    <property type="term" value="P:regulation of ergosterol biosynthetic process"/>
    <property type="evidence" value="ECO:0000303"/>
    <property type="project" value="PomBase"/>
</dbReference>
<dbReference type="GO" id="GO:0032933">
    <property type="term" value="P:SREBP signaling pathway"/>
    <property type="evidence" value="ECO:0000314"/>
    <property type="project" value="PomBase"/>
</dbReference>
<dbReference type="GO" id="GO:0008202">
    <property type="term" value="P:steroid metabolic process"/>
    <property type="evidence" value="ECO:0007669"/>
    <property type="project" value="UniProtKB-KW"/>
</dbReference>
<dbReference type="CDD" id="cd11399">
    <property type="entry name" value="bHLHzip_scHMS1_like"/>
    <property type="match status" value="1"/>
</dbReference>
<dbReference type="FunFam" id="4.10.280.10:FF:000116">
    <property type="entry name" value="Putative HLH transcription factor"/>
    <property type="match status" value="1"/>
</dbReference>
<dbReference type="Gene3D" id="4.10.280.10">
    <property type="entry name" value="Helix-loop-helix DNA-binding domain"/>
    <property type="match status" value="1"/>
</dbReference>
<dbReference type="InterPro" id="IPR011598">
    <property type="entry name" value="bHLH_dom"/>
</dbReference>
<dbReference type="InterPro" id="IPR036638">
    <property type="entry name" value="HLH_DNA-bd_sf"/>
</dbReference>
<dbReference type="InterPro" id="IPR052099">
    <property type="entry name" value="Regulatory_TF_Diverse"/>
</dbReference>
<dbReference type="InterPro" id="IPR019006">
    <property type="entry name" value="Sre1_C"/>
</dbReference>
<dbReference type="PANTHER" id="PTHR47336">
    <property type="entry name" value="TRANSCRIPTION FACTOR HMS1-RELATED"/>
    <property type="match status" value="1"/>
</dbReference>
<dbReference type="PANTHER" id="PTHR47336:SF2">
    <property type="entry name" value="TRANSCRIPTION FACTOR HMS1-RELATED"/>
    <property type="match status" value="1"/>
</dbReference>
<dbReference type="Pfam" id="PF09427">
    <property type="entry name" value="DUF2014"/>
    <property type="match status" value="1"/>
</dbReference>
<dbReference type="Pfam" id="PF00010">
    <property type="entry name" value="HLH"/>
    <property type="match status" value="1"/>
</dbReference>
<dbReference type="SMART" id="SM00353">
    <property type="entry name" value="HLH"/>
    <property type="match status" value="1"/>
</dbReference>
<dbReference type="SUPFAM" id="SSF47459">
    <property type="entry name" value="HLH, helix-loop-helix DNA-binding domain"/>
    <property type="match status" value="1"/>
</dbReference>
<dbReference type="PROSITE" id="PS50888">
    <property type="entry name" value="BHLH"/>
    <property type="match status" value="1"/>
</dbReference>
<proteinExistence type="evidence at protein level"/>
<feature type="chain" id="PRO_0000317067" description="Sterol regulatory element-binding protein 1">
    <location>
        <begin position="1"/>
        <end position="900"/>
    </location>
</feature>
<feature type="chain" id="PRO_0000317068" description="Processed sterol regulatory element-binding protein 1" evidence="5">
    <location>
        <begin position="1"/>
        <end position="407"/>
    </location>
</feature>
<feature type="topological domain" description="Cytoplasmic" evidence="2">
    <location>
        <begin position="1"/>
        <end position="442"/>
    </location>
</feature>
<feature type="transmembrane region" description="Helical" evidence="2">
    <location>
        <begin position="443"/>
        <end position="463"/>
    </location>
</feature>
<feature type="topological domain" description="Lumenal" evidence="2">
    <location>
        <begin position="464"/>
        <end position="509"/>
    </location>
</feature>
<feature type="transmembrane region" description="Helical" evidence="2">
    <location>
        <begin position="510"/>
        <end position="530"/>
    </location>
</feature>
<feature type="topological domain" description="Cytoplasmic" evidence="2">
    <location>
        <begin position="531"/>
        <end position="900"/>
    </location>
</feature>
<feature type="domain" description="bHLH" evidence="3">
    <location>
        <begin position="260"/>
        <end position="332"/>
    </location>
</feature>
<feature type="region of interest" description="Nuclear form of sre1; complements deletions of sre1 or scp1" evidence="5">
    <location>
        <begin position="1"/>
        <end position="440"/>
    </location>
</feature>
<feature type="region of interest" description="Disordered" evidence="4">
    <location>
        <begin position="1"/>
        <end position="49"/>
    </location>
</feature>
<feature type="region of interest" description="Disordered" evidence="4">
    <location>
        <begin position="206"/>
        <end position="263"/>
    </location>
</feature>
<feature type="compositionally biased region" description="Low complexity" evidence="4">
    <location>
        <begin position="1"/>
        <end position="16"/>
    </location>
</feature>
<feature type="compositionally biased region" description="Polar residues" evidence="4">
    <location>
        <begin position="21"/>
        <end position="32"/>
    </location>
</feature>
<feature type="compositionally biased region" description="Low complexity" evidence="4">
    <location>
        <begin position="35"/>
        <end position="49"/>
    </location>
</feature>
<feature type="modified residue" description="Phosphoserine" evidence="7">
    <location>
        <position position="898"/>
    </location>
</feature>
<feature type="modified residue" description="Phosphoserine" evidence="7">
    <location>
        <position position="899"/>
    </location>
</feature>
<feature type="mutagenesis site" description="In PPP; abolished homotetramerization, leading to the formation of a monomer." evidence="13">
    <original>LKI</original>
    <variation>PPP</variation>
    <location>
        <begin position="783"/>
        <end position="785"/>
    </location>
</feature>
<feature type="mutagenesis site" description="In ERG; abolished homotetramerization and formation of a complex with scp1." evidence="13">
    <original>EKMAMYVRTAIG</original>
    <variation>KKMAMYVETAID</variation>
    <location>
        <begin position="855"/>
        <end position="866"/>
    </location>
</feature>
<accession>Q9UUD1</accession>
<gene>
    <name evidence="15" type="primary">sre1</name>
    <name type="ORF">SPBC19C2.09</name>
</gene>
<sequence>MQSSIPSVSVSVASPAMETPTKASPDSKSPNSVGAIPSSSPLASSTKASTSTPFVENCSNLLCDLASIVEDSPPTLTNTSLSPHSFSLSDMESSMSNWLNPFAFDNTMNSAPPLFTSTNMGSPNSLENSTNPLLSNCGSPNSFQNETFTGPSLNEFDADDKIQRQMKILHSVDTIDPSTVQNYPSADMSNPEVKLKTEEIITPMDTTCKPEPSAKKIKLSPSSEDSCSIPETLPFSAPKSRGSLSPSETPDFVAGPGGKPKKTAHNMIEKRYRTNLNDRICELRDAVPSLRAAAALRCGNSLDDEDLGGLTPARKLNKGTILAKATEYIRHLEAKNKELQKTNKQLSDRLAFYEDPSMAPPSNDTRAVNSVNVVSSSDYSVHQSSRPNLTQRAFTSPTLNTMGRTALNGMVGLGLFNYFGNDSSQSVYGLFALPPFLMSPFTGTVLFNMLKIGVVLLGLFYLLHDNSLFKGFKGEKKSKVSTRSSMSPSSILFRKTVFEKYCLLDHSTSTISLFFGLLIFTLKSAYGYLTHRLSALYTSSENWVYSEQQLAEVRNMEKLLDAQLMGGDAKVDRLRLLMVFASSFSLPPSSHTCALQAMYCQLIFSNTSVPSAIVSKCVAFFWNAAKKQHSKSSVHAELRELPECTANLIENSHADDVFSPNMVERLWVLAKCTRDSAQMSDSIISSLSDVLVLSPLEVLASWYAADLLDALLMESLSRKVEISEIEEIISLCPKNSSIIRHALLAKLVLFPENTADSLNEVLAAYKNTLDLCSQDKRKQSSVLKINLSKLFTLHSCLSLALQRLGYGDVSKRMYQEIFVPDSDADITPLSFIISWTALNTFAPICTSPKENDVVEKMAMYVRTAIGTLKIQDLKLSRKLINSCIDIGSRLQEDLGYVSSA</sequence>
<comment type="function">
    <molecule>Sterol regulatory element-binding protein 1</molecule>
    <text evidence="5">Precursor of the transcription factor form (Processed sterol regulatory element-binding protein 1), which is embedded in the endoplasmic reticulum membrane (PubMed:15797383). Low oxygen or sterol conditions promote processing of this form, releasing the transcription factor form that translocates into the nucleus and activates transcription of genes required for adaptation to anaerobic growth (PubMed:15797383).</text>
</comment>
<comment type="function">
    <molecule>Processed sterol regulatory element-binding protein 1</molecule>
    <text evidence="5 6 8 11 12">Transcriptional activator required for transcription of genes required for adaptation to anaerobic growth like those implicated in the nonrespiratory oxygen-consumptive biosynthetic pathways of sterol, heme, sphingolipid, and ubiquinone biosynthesis. May monitor oxygen levels through sterol synthesis steps which require oxygen.</text>
</comment>
<comment type="subunit">
    <text evidence="5 10 13">Forms a tight complex with scp1, composed of 4 copies of scp1 and 4 copies of sre1, which protects sre1 precursor from degradation by the proteasome.</text>
</comment>
<comment type="subcellular location">
    <subcellularLocation>
        <location evidence="1">Endoplasmic reticulum membrane</location>
        <topology evidence="1">Multi-pass membrane protein</topology>
    </subcellularLocation>
</comment>
<comment type="subcellular location">
    <molecule>Processed sterol regulatory element-binding protein 1</molecule>
    <subcellularLocation>
        <location evidence="6">Nucleus</location>
    </subcellularLocation>
    <text evidence="6">Accumulates at promoters of the target genes (PubMed:16537923).</text>
</comment>
<comment type="induction">
    <text evidence="5 9">Proteolytic processing to mature form is induced by low oxygen or sterols. The processed form binds to its own promoter to promote positive feedback regulation and ensure maximal activation.</text>
</comment>
<comment type="PTM">
    <text evidence="5 11 12">In low oxygen or sterol conditions, undergoes proteolytic cleavage by rhomboid-type protease rbd2 and is released as soluble transcription factor from the membrane.</text>
</comment>
<comment type="PTM">
    <text evidence="5 7">Processed form is phosphorylated.</text>
</comment>
<comment type="disruption phenotype">
    <text evidence="5">Cells fail to grow in the absence of oxygen or sterols.</text>
</comment>
<reference key="1">
    <citation type="journal article" date="2002" name="Nature">
        <title>The genome sequence of Schizosaccharomyces pombe.</title>
        <authorList>
            <person name="Wood V."/>
            <person name="Gwilliam R."/>
            <person name="Rajandream M.A."/>
            <person name="Lyne M.H."/>
            <person name="Lyne R."/>
            <person name="Stewart A."/>
            <person name="Sgouros J.G."/>
            <person name="Peat N."/>
            <person name="Hayles J."/>
            <person name="Baker S.G."/>
            <person name="Basham D."/>
            <person name="Bowman S."/>
            <person name="Brooks K."/>
            <person name="Brown D."/>
            <person name="Brown S."/>
            <person name="Chillingworth T."/>
            <person name="Churcher C.M."/>
            <person name="Collins M."/>
            <person name="Connor R."/>
            <person name="Cronin A."/>
            <person name="Davis P."/>
            <person name="Feltwell T."/>
            <person name="Fraser A."/>
            <person name="Gentles S."/>
            <person name="Goble A."/>
            <person name="Hamlin N."/>
            <person name="Harris D.E."/>
            <person name="Hidalgo J."/>
            <person name="Hodgson G."/>
            <person name="Holroyd S."/>
            <person name="Hornsby T."/>
            <person name="Howarth S."/>
            <person name="Huckle E.J."/>
            <person name="Hunt S."/>
            <person name="Jagels K."/>
            <person name="James K.D."/>
            <person name="Jones L."/>
            <person name="Jones M."/>
            <person name="Leather S."/>
            <person name="McDonald S."/>
            <person name="McLean J."/>
            <person name="Mooney P."/>
            <person name="Moule S."/>
            <person name="Mungall K.L."/>
            <person name="Murphy L.D."/>
            <person name="Niblett D."/>
            <person name="Odell C."/>
            <person name="Oliver K."/>
            <person name="O'Neil S."/>
            <person name="Pearson D."/>
            <person name="Quail M.A."/>
            <person name="Rabbinowitsch E."/>
            <person name="Rutherford K.M."/>
            <person name="Rutter S."/>
            <person name="Saunders D."/>
            <person name="Seeger K."/>
            <person name="Sharp S."/>
            <person name="Skelton J."/>
            <person name="Simmonds M.N."/>
            <person name="Squares R."/>
            <person name="Squares S."/>
            <person name="Stevens K."/>
            <person name="Taylor K."/>
            <person name="Taylor R.G."/>
            <person name="Tivey A."/>
            <person name="Walsh S.V."/>
            <person name="Warren T."/>
            <person name="Whitehead S."/>
            <person name="Woodward J.R."/>
            <person name="Volckaert G."/>
            <person name="Aert R."/>
            <person name="Robben J."/>
            <person name="Grymonprez B."/>
            <person name="Weltjens I."/>
            <person name="Vanstreels E."/>
            <person name="Rieger M."/>
            <person name="Schaefer M."/>
            <person name="Mueller-Auer S."/>
            <person name="Gabel C."/>
            <person name="Fuchs M."/>
            <person name="Duesterhoeft A."/>
            <person name="Fritzc C."/>
            <person name="Holzer E."/>
            <person name="Moestl D."/>
            <person name="Hilbert H."/>
            <person name="Borzym K."/>
            <person name="Langer I."/>
            <person name="Beck A."/>
            <person name="Lehrach H."/>
            <person name="Reinhardt R."/>
            <person name="Pohl T.M."/>
            <person name="Eger P."/>
            <person name="Zimmermann W."/>
            <person name="Wedler H."/>
            <person name="Wambutt R."/>
            <person name="Purnelle B."/>
            <person name="Goffeau A."/>
            <person name="Cadieu E."/>
            <person name="Dreano S."/>
            <person name="Gloux S."/>
            <person name="Lelaure V."/>
            <person name="Mottier S."/>
            <person name="Galibert F."/>
            <person name="Aves S.J."/>
            <person name="Xiang Z."/>
            <person name="Hunt C."/>
            <person name="Moore K."/>
            <person name="Hurst S.M."/>
            <person name="Lucas M."/>
            <person name="Rochet M."/>
            <person name="Gaillardin C."/>
            <person name="Tallada V.A."/>
            <person name="Garzon A."/>
            <person name="Thode G."/>
            <person name="Daga R.R."/>
            <person name="Cruzado L."/>
            <person name="Jimenez J."/>
            <person name="Sanchez M."/>
            <person name="del Rey F."/>
            <person name="Benito J."/>
            <person name="Dominguez A."/>
            <person name="Revuelta J.L."/>
            <person name="Moreno S."/>
            <person name="Armstrong J."/>
            <person name="Forsburg S.L."/>
            <person name="Cerutti L."/>
            <person name="Lowe T."/>
            <person name="McCombie W.R."/>
            <person name="Paulsen I."/>
            <person name="Potashkin J."/>
            <person name="Shpakovski G.V."/>
            <person name="Ussery D."/>
            <person name="Barrell B.G."/>
            <person name="Nurse P."/>
        </authorList>
    </citation>
    <scope>NUCLEOTIDE SEQUENCE [LARGE SCALE GENOMIC DNA]</scope>
    <source>
        <strain>972 / ATCC 24843</strain>
    </source>
</reference>
<reference evidence="14" key="2">
    <citation type="journal article" date="2005" name="Cell">
        <title>SREBP pathway responds to sterols and functions as an oxygen sensor in fission yeast.</title>
        <authorList>
            <person name="Hughes A.L."/>
            <person name="Todd B.L."/>
            <person name="Espenshade P.J."/>
        </authorList>
    </citation>
    <scope>FUNCTION</scope>
    <scope>INDUCTION</scope>
    <scope>PHOSPHORYLATION</scope>
    <scope>INTERACTION WITH SCP1</scope>
    <scope>DISRUPTION PHENOTYPE</scope>
</reference>
<reference key="3">
    <citation type="journal article" date="2006" name="Mol. Cell. Biol.">
        <title>Sterol regulatory element binding protein is a principal regulator of anaerobic gene expression in fission yeast.</title>
        <authorList>
            <person name="Todd B.L."/>
            <person name="Stewart E.V."/>
            <person name="Burg J.S."/>
            <person name="Hughes A.L."/>
            <person name="Espenshade P.J."/>
        </authorList>
    </citation>
    <scope>FUNCTION</scope>
    <scope>SUBCELLULAR LOCATION</scope>
    <scope>DNA-BINDING</scope>
</reference>
<reference key="4">
    <citation type="journal article" date="2008" name="J. Proteome Res.">
        <title>Phosphoproteome analysis of fission yeast.</title>
        <authorList>
            <person name="Wilson-Grady J.T."/>
            <person name="Villen J."/>
            <person name="Gygi S.P."/>
        </authorList>
    </citation>
    <scope>PHOSPHORYLATION [LARGE SCALE ANALYSIS] AT SER-898 AND SER-899</scope>
    <scope>IDENTIFICATION BY MASS SPECTROMETRY</scope>
</reference>
<reference key="5">
    <citation type="journal article" date="2008" name="Nucleic Acids Res.">
        <title>Oxygen-dependent, alternative promoter controls translation of tco1+ in fission yeast.</title>
        <authorList>
            <person name="Sehgal A."/>
            <person name="Hughes B.T."/>
            <person name="Espenshade P.J."/>
        </authorList>
    </citation>
    <scope>FUNCTION</scope>
</reference>
<reference key="6">
    <citation type="journal article" date="2009" name="J. Biol. Chem.">
        <title>Degradation of sterol regulatory element-binding protein precursor requires the endoplasmic reticulum-associated degradation components Ubc7 and Hrd1 in fission yeast.</title>
        <authorList>
            <person name="Hughes B.T."/>
            <person name="Nwosu C.C."/>
            <person name="Espenshade P.J."/>
        </authorList>
    </citation>
    <scope>INDUCTION</scope>
    <scope>INTERACTION WITH SCP1</scope>
</reference>
<reference key="7">
    <citation type="journal article" date="2015" name="Biochem. Biophys. Res. Commun.">
        <title>Identification of Rbd2 as a candidate protease for sterol regulatory element binding protein (SREBP) cleavage in fission yeast.</title>
        <authorList>
            <person name="Kim J."/>
            <person name="Ha H.J."/>
            <person name="Kim S."/>
            <person name="Choi A.R."/>
            <person name="Lee S.J."/>
            <person name="Hoe K.L."/>
            <person name="Kim D.U."/>
        </authorList>
    </citation>
    <scope>FUNCTION</scope>
    <scope>CLEAVAGE BY RBD2</scope>
</reference>
<reference key="8">
    <citation type="journal article" date="2015" name="Cell Res.">
        <title>Structure of the WD40 domain of SCAP from fission yeast reveals the molecular basis for SREBP recognition.</title>
        <authorList>
            <person name="Gong X."/>
            <person name="Li J."/>
            <person name="Shao W."/>
            <person name="Wu J."/>
            <person name="Qian H."/>
            <person name="Ren R."/>
            <person name="Espenshade P."/>
            <person name="Yan N."/>
        </authorList>
    </citation>
    <scope>INTERACTION WITH SCP1</scope>
</reference>
<reference key="9">
    <citation type="journal article" date="2016" name="EMBO J.">
        <title>A Golgi rhomboid protease Rbd2 recruits Cdc48 to cleave yeast SREBP.</title>
        <authorList>
            <person name="Hwang J."/>
            <person name="Ribbens D."/>
            <person name="Raychaudhuri S."/>
            <person name="Cairns L."/>
            <person name="Gu H."/>
            <person name="Frost A."/>
            <person name="Urban S."/>
            <person name="Espenshade P.J."/>
        </authorList>
    </citation>
    <scope>FUNCTION</scope>
    <scope>CLEAVAGE BY RBD2</scope>
</reference>
<reference evidence="16 17" key="10">
    <citation type="journal article" date="2016" name="Cell Res.">
        <title>Complex structure of the fission yeast SREBP-SCAP binding domains reveals an oligomeric organization.</title>
        <authorList>
            <person name="Gong X."/>
            <person name="Qian H."/>
            <person name="Shao W."/>
            <person name="Li J."/>
            <person name="Wu J."/>
            <person name="Liu J.J."/>
            <person name="Li W."/>
            <person name="Wang H.W."/>
            <person name="Espenshade P."/>
            <person name="Yan N."/>
        </authorList>
    </citation>
    <scope>X-RAY CRYSTALLOGRAPHY (3.50 ANGSTROMS) OF 628-876 IN COMPLEX WITH SCP1</scope>
    <scope>INTERACTION WITH SCP1</scope>
    <scope>SUBUNIT</scope>
    <scope>MUTAGENESIS OF 783-LEU--ILE-785 AND 855-GLU--GLY-866</scope>
</reference>